<organism>
    <name type="scientific">Sinorhizobium fredii (strain NBRC 101917 / NGR234)</name>
    <dbReference type="NCBI Taxonomy" id="394"/>
    <lineage>
        <taxon>Bacteria</taxon>
        <taxon>Pseudomonadati</taxon>
        <taxon>Pseudomonadota</taxon>
        <taxon>Alphaproteobacteria</taxon>
        <taxon>Hyphomicrobiales</taxon>
        <taxon>Rhizobiaceae</taxon>
        <taxon>Sinorhizobium/Ensifer group</taxon>
        <taxon>Sinorhizobium</taxon>
    </lineage>
</organism>
<name>Y4XN_SINFN</name>
<reference key="1">
    <citation type="journal article" date="1997" name="Nature">
        <title>Molecular basis of symbiosis between Rhizobium and legumes.</title>
        <authorList>
            <person name="Freiberg C.A."/>
            <person name="Fellay R."/>
            <person name="Bairoch A."/>
            <person name="Broughton W.J."/>
            <person name="Rosenthal A."/>
            <person name="Perret X."/>
        </authorList>
    </citation>
    <scope>NUCLEOTIDE SEQUENCE [LARGE SCALE GENOMIC DNA]</scope>
    <source>
        <strain>NBRC 101917 / NGR234</strain>
    </source>
</reference>
<reference key="2">
    <citation type="journal article" date="2009" name="Appl. Environ. Microbiol.">
        <title>Rhizobium sp. strain NGR234 possesses a remarkable number of secretion systems.</title>
        <authorList>
            <person name="Schmeisser C."/>
            <person name="Liesegang H."/>
            <person name="Krysciak D."/>
            <person name="Bakkou N."/>
            <person name="Le Quere A."/>
            <person name="Wollherr A."/>
            <person name="Heinemeyer I."/>
            <person name="Morgenstern B."/>
            <person name="Pommerening-Roeser A."/>
            <person name="Flores M."/>
            <person name="Palacios R."/>
            <person name="Brenner S."/>
            <person name="Gottschalk G."/>
            <person name="Schmitz R.A."/>
            <person name="Broughton W.J."/>
            <person name="Perret X."/>
            <person name="Strittmatter A.W."/>
            <person name="Streit W.R."/>
        </authorList>
    </citation>
    <scope>NUCLEOTIDE SEQUENCE [LARGE SCALE GENOMIC DNA]</scope>
    <source>
        <strain>NBRC 101917 / NGR234</strain>
    </source>
</reference>
<sequence length="628" mass="71013">MDEKTPSVTNPVENEDLALLTQASRNAINRLVRCLFAERLLAPNALLWAREGRQAWFPLWPSQRMLHFTDLSLAPAGTLRNRGQIEVLDGTGARQRIDDPAALMREVASSLAITPASDGLEHLLRDVDNSMRNDMLARRERGRWSARLRQEIAEAGAPGFLAYLERSLPTHLAAMTLDQWGALEGHPFYPTWKAKPGLAAEEVAALSPEFGARVPLRIAALRSSWAYVEKMPHVGSYSEWFAENFPDLSRDWAEGLKARGQSPEDWLPLPVHAWHLEHFVRREFAAEIEAGIFDPDGPEIVTLPSMSFRTMLPTTEAPRPFIKLPVAIWMTSEQRTLQAKSIHMGPRLSTLISDIVSEEDDLRCRLEILTEELGAILRHPETGDEHLGRFLSVVYRKADALARRDGLLPVTVAALLTAGPVDGRPLICELIGKSGDESEAAIAAFFRLYARTVVRPTLAMYLLYGIAFEAHQQNSTILFDDRGLPRKLLIRDFGDGRSFAPLFTERGYELQPFSRGGILPTTFDDDISLVRSFLINACFVCHLHEIALCLTEQYSVAGDSLWRVLREETEEAFETLRPRMLSDAFWLEERQAFLERPWPARSVLRMHLERYRDYRIEHQLPNPLASAE</sequence>
<evidence type="ECO:0000305" key="1"/>
<accession>P55706</accession>
<proteinExistence type="inferred from homology"/>
<dbReference type="EMBL" id="U00090">
    <property type="protein sequence ID" value="AAB91937.1"/>
    <property type="molecule type" value="Genomic_DNA"/>
</dbReference>
<dbReference type="RefSeq" id="NP_444150.1">
    <property type="nucleotide sequence ID" value="NC_000914.2"/>
</dbReference>
<dbReference type="RefSeq" id="WP_010875116.1">
    <property type="nucleotide sequence ID" value="NC_000914.2"/>
</dbReference>
<dbReference type="SMR" id="P55706"/>
<dbReference type="KEGG" id="rhi:NGR_a00750"/>
<dbReference type="PATRIC" id="fig|394.7.peg.67"/>
<dbReference type="eggNOG" id="COG4264">
    <property type="taxonomic scope" value="Bacteria"/>
</dbReference>
<dbReference type="HOGENOM" id="CLU_018524_3_0_5"/>
<dbReference type="OrthoDB" id="495728at2"/>
<dbReference type="Proteomes" id="UP000001054">
    <property type="component" value="Plasmid pNGR234a"/>
</dbReference>
<dbReference type="GO" id="GO:0016881">
    <property type="term" value="F:acid-amino acid ligase activity"/>
    <property type="evidence" value="ECO:0007669"/>
    <property type="project" value="UniProtKB-ARBA"/>
</dbReference>
<dbReference type="GO" id="GO:0019290">
    <property type="term" value="P:siderophore biosynthetic process"/>
    <property type="evidence" value="ECO:0007669"/>
    <property type="project" value="InterPro"/>
</dbReference>
<dbReference type="Gene3D" id="1.10.510.40">
    <property type="match status" value="1"/>
</dbReference>
<dbReference type="InterPro" id="IPR007310">
    <property type="entry name" value="Aerobactin_biosyn_IucA/IucC_N"/>
</dbReference>
<dbReference type="InterPro" id="IPR022770">
    <property type="entry name" value="IucA/IucC-like_C"/>
</dbReference>
<dbReference type="InterPro" id="IPR037455">
    <property type="entry name" value="LucA/IucC-like"/>
</dbReference>
<dbReference type="PANTHER" id="PTHR34384">
    <property type="entry name" value="L-2,3-DIAMINOPROPANOATE--CITRATE LIGASE"/>
    <property type="match status" value="1"/>
</dbReference>
<dbReference type="PANTHER" id="PTHR34384:SF5">
    <property type="entry name" value="L-2,3-DIAMINOPROPANOATE--CITRATE LIGASE"/>
    <property type="match status" value="1"/>
</dbReference>
<dbReference type="Pfam" id="PF06276">
    <property type="entry name" value="FhuF"/>
    <property type="match status" value="1"/>
</dbReference>
<dbReference type="Pfam" id="PF04183">
    <property type="entry name" value="IucA_IucC"/>
    <property type="match status" value="1"/>
</dbReference>
<geneLocation type="plasmid">
    <name>sym pNGR234a</name>
</geneLocation>
<keyword id="KW-0614">Plasmid</keyword>
<keyword id="KW-1185">Reference proteome</keyword>
<feature type="chain" id="PRO_0000200968" description="Uncharacterized protein y4xN">
    <location>
        <begin position="1"/>
        <end position="628"/>
    </location>
</feature>
<protein>
    <recommendedName>
        <fullName>Uncharacterized protein y4xN</fullName>
    </recommendedName>
</protein>
<comment type="similarity">
    <text evidence="1">Belongs to the IucA/IucC family.</text>
</comment>
<gene>
    <name type="ordered locus">NGR_a00750</name>
    <name type="ORF">y4xN</name>
</gene>